<organism>
    <name type="scientific">Homo sapiens</name>
    <name type="common">Human</name>
    <dbReference type="NCBI Taxonomy" id="9606"/>
    <lineage>
        <taxon>Eukaryota</taxon>
        <taxon>Metazoa</taxon>
        <taxon>Chordata</taxon>
        <taxon>Craniata</taxon>
        <taxon>Vertebrata</taxon>
        <taxon>Euteleostomi</taxon>
        <taxon>Mammalia</taxon>
        <taxon>Eutheria</taxon>
        <taxon>Euarchontoglires</taxon>
        <taxon>Primates</taxon>
        <taxon>Haplorrhini</taxon>
        <taxon>Catarrhini</taxon>
        <taxon>Hominidae</taxon>
        <taxon>Homo</taxon>
    </lineage>
</organism>
<dbReference type="EMBL" id="AF045606">
    <property type="protein sequence ID" value="AAC05974.2"/>
    <property type="molecule type" value="mRNA"/>
</dbReference>
<dbReference type="EMBL" id="AF039906">
    <property type="protein sequence ID" value="AAC05090.1"/>
    <property type="molecule type" value="Genomic_DNA"/>
</dbReference>
<dbReference type="EMBL" id="AY820138">
    <property type="protein sequence ID" value="AAV68502.1"/>
    <property type="molecule type" value="mRNA"/>
</dbReference>
<dbReference type="EMBL" id="AY358634">
    <property type="protein sequence ID" value="AAQ88997.1"/>
    <property type="molecule type" value="mRNA"/>
</dbReference>
<dbReference type="EMBL" id="AK311870">
    <property type="protein sequence ID" value="BAG34811.1"/>
    <property type="molecule type" value="mRNA"/>
</dbReference>
<dbReference type="EMBL" id="BX537378">
    <property type="protein sequence ID" value="CAD97620.1"/>
    <property type="molecule type" value="mRNA"/>
</dbReference>
<dbReference type="EMBL" id="CH471079">
    <property type="protein sequence ID" value="EAX09832.1"/>
    <property type="molecule type" value="Genomic_DNA"/>
</dbReference>
<dbReference type="EMBL" id="CH471079">
    <property type="protein sequence ID" value="EAX09833.1"/>
    <property type="molecule type" value="Genomic_DNA"/>
</dbReference>
<dbReference type="EMBL" id="BC000569">
    <property type="protein sequence ID" value="AAH00569.1"/>
    <property type="molecule type" value="mRNA"/>
</dbReference>
<dbReference type="CCDS" id="CCDS13625.1"/>
<dbReference type="RefSeq" id="NP_006125.2">
    <property type="nucleotide sequence ID" value="NM_006134.6"/>
</dbReference>
<dbReference type="RefSeq" id="XP_011528048.1">
    <property type="nucleotide sequence ID" value="XM_011529746.3"/>
</dbReference>
<dbReference type="RefSeq" id="XP_054180826.1">
    <property type="nucleotide sequence ID" value="XM_054324851.1"/>
</dbReference>
<dbReference type="RefSeq" id="XP_054185586.1">
    <property type="nucleotide sequence ID" value="XM_054329611.1"/>
</dbReference>
<dbReference type="BioGRID" id="107212">
    <property type="interactions" value="24"/>
</dbReference>
<dbReference type="FunCoup" id="P56557">
    <property type="interactions" value="1581"/>
</dbReference>
<dbReference type="IntAct" id="P56557">
    <property type="interactions" value="22"/>
</dbReference>
<dbReference type="STRING" id="9606.ENSP00000439768"/>
<dbReference type="TCDB" id="9.B.199.1.2">
    <property type="family name" value="the 4 tms pf05225 (pf0225) family"/>
</dbReference>
<dbReference type="iPTMnet" id="P56557"/>
<dbReference type="SwissPalm" id="P56557"/>
<dbReference type="BioMuta" id="TMEM50B"/>
<dbReference type="DMDM" id="12643476"/>
<dbReference type="jPOST" id="P56557"/>
<dbReference type="MassIVE" id="P56557"/>
<dbReference type="PaxDb" id="9606-ENSP00000439768"/>
<dbReference type="PeptideAtlas" id="P56557"/>
<dbReference type="ProteomicsDB" id="56927"/>
<dbReference type="Pumba" id="P56557"/>
<dbReference type="Antibodypedia" id="42040">
    <property type="antibodies" value="37 antibodies from 18 providers"/>
</dbReference>
<dbReference type="DNASU" id="757"/>
<dbReference type="Ensembl" id="ENST00000420455.5">
    <property type="protein sequence ID" value="ENSP00000397773.1"/>
    <property type="gene ID" value="ENSG00000142188.17"/>
</dbReference>
<dbReference type="Ensembl" id="ENST00000542230.7">
    <property type="protein sequence ID" value="ENSP00000439768.2"/>
    <property type="gene ID" value="ENSG00000142188.17"/>
</dbReference>
<dbReference type="Ensembl" id="ENST00000571778.5">
    <property type="protein sequence ID" value="ENSP00000458900.1"/>
    <property type="gene ID" value="ENSG00000263160.6"/>
</dbReference>
<dbReference type="Ensembl" id="ENST00000573374.5">
    <property type="protein sequence ID" value="ENSP00000460121.1"/>
    <property type="gene ID" value="ENSG00000263160.6"/>
</dbReference>
<dbReference type="GeneID" id="757"/>
<dbReference type="KEGG" id="hsa:757"/>
<dbReference type="MANE-Select" id="ENST00000542230.7">
    <property type="protein sequence ID" value="ENSP00000439768.2"/>
    <property type="RefSeq nucleotide sequence ID" value="NM_006134.7"/>
    <property type="RefSeq protein sequence ID" value="NP_006125.2"/>
</dbReference>
<dbReference type="UCSC" id="uc061zqd.1">
    <property type="organism name" value="human"/>
</dbReference>
<dbReference type="AGR" id="HGNC:1280"/>
<dbReference type="CTD" id="757"/>
<dbReference type="DisGeNET" id="757"/>
<dbReference type="GeneCards" id="TMEM50B"/>
<dbReference type="HGNC" id="HGNC:1280">
    <property type="gene designation" value="TMEM50B"/>
</dbReference>
<dbReference type="HPA" id="ENSG00000142188">
    <property type="expression patterns" value="Low tissue specificity"/>
</dbReference>
<dbReference type="MIM" id="617894">
    <property type="type" value="gene"/>
</dbReference>
<dbReference type="neXtProt" id="NX_P56557"/>
<dbReference type="OpenTargets" id="ENSG00000142188"/>
<dbReference type="PharmGKB" id="PA25835"/>
<dbReference type="VEuPathDB" id="HostDB:ENSG00000142188"/>
<dbReference type="eggNOG" id="KOG3393">
    <property type="taxonomic scope" value="Eukaryota"/>
</dbReference>
<dbReference type="GeneTree" id="ENSGT00940000155131"/>
<dbReference type="HOGENOM" id="CLU_096876_1_0_1"/>
<dbReference type="InParanoid" id="P56557"/>
<dbReference type="OMA" id="LWIMFAD"/>
<dbReference type="OrthoDB" id="268928at2759"/>
<dbReference type="PAN-GO" id="P56557">
    <property type="GO annotations" value="1 GO annotation based on evolutionary models"/>
</dbReference>
<dbReference type="PhylomeDB" id="P56557"/>
<dbReference type="TreeFam" id="TF300282"/>
<dbReference type="PathwayCommons" id="P56557"/>
<dbReference type="SignaLink" id="P56557"/>
<dbReference type="BioGRID-ORCS" id="757">
    <property type="hits" value="27 hits in 1121 CRISPR screens"/>
</dbReference>
<dbReference type="ChiTaRS" id="TMEM50B">
    <property type="organism name" value="human"/>
</dbReference>
<dbReference type="GenomeRNAi" id="757"/>
<dbReference type="Pharos" id="P56557">
    <property type="development level" value="Tdark"/>
</dbReference>
<dbReference type="PRO" id="PR:P56557"/>
<dbReference type="Proteomes" id="UP000005640">
    <property type="component" value="Chromosome 21"/>
</dbReference>
<dbReference type="RNAct" id="P56557">
    <property type="molecule type" value="protein"/>
</dbReference>
<dbReference type="Bgee" id="ENSG00000142188">
    <property type="expression patterns" value="Expressed in right lobe of thyroid gland and 95 other cell types or tissues"/>
</dbReference>
<dbReference type="ExpressionAtlas" id="P56557">
    <property type="expression patterns" value="baseline and differential"/>
</dbReference>
<dbReference type="GO" id="GO:0005783">
    <property type="term" value="C:endoplasmic reticulum"/>
    <property type="evidence" value="ECO:0000314"/>
    <property type="project" value="LIFEdb"/>
</dbReference>
<dbReference type="GO" id="GO:0005789">
    <property type="term" value="C:endoplasmic reticulum membrane"/>
    <property type="evidence" value="ECO:0007669"/>
    <property type="project" value="UniProtKB-SubCell"/>
</dbReference>
<dbReference type="GO" id="GO:0000139">
    <property type="term" value="C:Golgi membrane"/>
    <property type="evidence" value="ECO:0007669"/>
    <property type="project" value="UniProtKB-SubCell"/>
</dbReference>
<dbReference type="GO" id="GO:0005886">
    <property type="term" value="C:plasma membrane"/>
    <property type="evidence" value="ECO:0007005"/>
    <property type="project" value="UniProtKB"/>
</dbReference>
<dbReference type="GO" id="GO:0032511">
    <property type="term" value="P:late endosome to vacuole transport via multivesicular body sorting pathway"/>
    <property type="evidence" value="ECO:0000318"/>
    <property type="project" value="GO_Central"/>
</dbReference>
<dbReference type="InterPro" id="IPR007919">
    <property type="entry name" value="UPF0220"/>
</dbReference>
<dbReference type="PANTHER" id="PTHR13180">
    <property type="entry name" value="SMALL MEMBRANE PROTEIN-RELATED"/>
    <property type="match status" value="1"/>
</dbReference>
<dbReference type="Pfam" id="PF05255">
    <property type="entry name" value="UPF0220"/>
    <property type="match status" value="1"/>
</dbReference>
<feature type="initiator methionine" description="Removed" evidence="4">
    <location>
        <position position="1"/>
    </location>
</feature>
<feature type="chain" id="PRO_0000174183" description="Transmembrane protein 50B">
    <location>
        <begin position="2"/>
        <end position="158"/>
    </location>
</feature>
<feature type="transmembrane region" description="Helical" evidence="2">
    <location>
        <begin position="28"/>
        <end position="48"/>
    </location>
</feature>
<feature type="transmembrane region" description="Helical" evidence="2">
    <location>
        <begin position="56"/>
        <end position="76"/>
    </location>
</feature>
<feature type="transmembrane region" description="Helical" evidence="2">
    <location>
        <begin position="98"/>
        <end position="118"/>
    </location>
</feature>
<feature type="transmembrane region" description="Helical" evidence="2">
    <location>
        <begin position="128"/>
        <end position="148"/>
    </location>
</feature>
<feature type="modified residue" description="N-acetylalanine" evidence="4">
    <location>
        <position position="2"/>
    </location>
</feature>
<reference key="1">
    <citation type="journal article" date="1999" name="Genome Res.">
        <title>Comparative genomic analysis of the interferon/interleukin-10 receptor gene cluster.</title>
        <authorList>
            <person name="Reboul J."/>
            <person name="Gardiner K."/>
            <person name="Monneron D."/>
            <person name="Uze G."/>
            <person name="Lutfalla G."/>
        </authorList>
    </citation>
    <scope>NUCLEOTIDE SEQUENCE [GENOMIC DNA / MRNA]</scope>
</reference>
<reference key="2">
    <citation type="submission" date="2004-11" db="EMBL/GenBank/DDBJ databases">
        <title>Screening and identification of genes trans-regulated by HCV p7 protein with microarray assay.</title>
        <authorList>
            <person name="Guo J."/>
            <person name="Cheng J."/>
            <person name="Ji D."/>
            <person name="Zhao L.-F."/>
            <person name="Zhang L.-Y."/>
        </authorList>
    </citation>
    <scope>NUCLEOTIDE SEQUENCE [MRNA]</scope>
</reference>
<reference key="3">
    <citation type="journal article" date="2003" name="Genome Res.">
        <title>The secreted protein discovery initiative (SPDI), a large-scale effort to identify novel human secreted and transmembrane proteins: a bioinformatics assessment.</title>
        <authorList>
            <person name="Clark H.F."/>
            <person name="Gurney A.L."/>
            <person name="Abaya E."/>
            <person name="Baker K."/>
            <person name="Baldwin D.T."/>
            <person name="Brush J."/>
            <person name="Chen J."/>
            <person name="Chow B."/>
            <person name="Chui C."/>
            <person name="Crowley C."/>
            <person name="Currell B."/>
            <person name="Deuel B."/>
            <person name="Dowd P."/>
            <person name="Eaton D."/>
            <person name="Foster J.S."/>
            <person name="Grimaldi C."/>
            <person name="Gu Q."/>
            <person name="Hass P.E."/>
            <person name="Heldens S."/>
            <person name="Huang A."/>
            <person name="Kim H.S."/>
            <person name="Klimowski L."/>
            <person name="Jin Y."/>
            <person name="Johnson S."/>
            <person name="Lee J."/>
            <person name="Lewis L."/>
            <person name="Liao D."/>
            <person name="Mark M.R."/>
            <person name="Robbie E."/>
            <person name="Sanchez C."/>
            <person name="Schoenfeld J."/>
            <person name="Seshagiri S."/>
            <person name="Simmons L."/>
            <person name="Singh J."/>
            <person name="Smith V."/>
            <person name="Stinson J."/>
            <person name="Vagts A."/>
            <person name="Vandlen R.L."/>
            <person name="Watanabe C."/>
            <person name="Wieand D."/>
            <person name="Woods K."/>
            <person name="Xie M.-H."/>
            <person name="Yansura D.G."/>
            <person name="Yi S."/>
            <person name="Yu G."/>
            <person name="Yuan J."/>
            <person name="Zhang M."/>
            <person name="Zhang Z."/>
            <person name="Goddard A.D."/>
            <person name="Wood W.I."/>
            <person name="Godowski P.J."/>
            <person name="Gray A.M."/>
        </authorList>
    </citation>
    <scope>NUCLEOTIDE SEQUENCE [LARGE SCALE MRNA]</scope>
</reference>
<reference key="4">
    <citation type="journal article" date="2004" name="Nat. Genet.">
        <title>Complete sequencing and characterization of 21,243 full-length human cDNAs.</title>
        <authorList>
            <person name="Ota T."/>
            <person name="Suzuki Y."/>
            <person name="Nishikawa T."/>
            <person name="Otsuki T."/>
            <person name="Sugiyama T."/>
            <person name="Irie R."/>
            <person name="Wakamatsu A."/>
            <person name="Hayashi K."/>
            <person name="Sato H."/>
            <person name="Nagai K."/>
            <person name="Kimura K."/>
            <person name="Makita H."/>
            <person name="Sekine M."/>
            <person name="Obayashi M."/>
            <person name="Nishi T."/>
            <person name="Shibahara T."/>
            <person name="Tanaka T."/>
            <person name="Ishii S."/>
            <person name="Yamamoto J."/>
            <person name="Saito K."/>
            <person name="Kawai Y."/>
            <person name="Isono Y."/>
            <person name="Nakamura Y."/>
            <person name="Nagahari K."/>
            <person name="Murakami K."/>
            <person name="Yasuda T."/>
            <person name="Iwayanagi T."/>
            <person name="Wagatsuma M."/>
            <person name="Shiratori A."/>
            <person name="Sudo H."/>
            <person name="Hosoiri T."/>
            <person name="Kaku Y."/>
            <person name="Kodaira H."/>
            <person name="Kondo H."/>
            <person name="Sugawara M."/>
            <person name="Takahashi M."/>
            <person name="Kanda K."/>
            <person name="Yokoi T."/>
            <person name="Furuya T."/>
            <person name="Kikkawa E."/>
            <person name="Omura Y."/>
            <person name="Abe K."/>
            <person name="Kamihara K."/>
            <person name="Katsuta N."/>
            <person name="Sato K."/>
            <person name="Tanikawa M."/>
            <person name="Yamazaki M."/>
            <person name="Ninomiya K."/>
            <person name="Ishibashi T."/>
            <person name="Yamashita H."/>
            <person name="Murakawa K."/>
            <person name="Fujimori K."/>
            <person name="Tanai H."/>
            <person name="Kimata M."/>
            <person name="Watanabe M."/>
            <person name="Hiraoka S."/>
            <person name="Chiba Y."/>
            <person name="Ishida S."/>
            <person name="Ono Y."/>
            <person name="Takiguchi S."/>
            <person name="Watanabe S."/>
            <person name="Yosida M."/>
            <person name="Hotuta T."/>
            <person name="Kusano J."/>
            <person name="Kanehori K."/>
            <person name="Takahashi-Fujii A."/>
            <person name="Hara H."/>
            <person name="Tanase T.-O."/>
            <person name="Nomura Y."/>
            <person name="Togiya S."/>
            <person name="Komai F."/>
            <person name="Hara R."/>
            <person name="Takeuchi K."/>
            <person name="Arita M."/>
            <person name="Imose N."/>
            <person name="Musashino K."/>
            <person name="Yuuki H."/>
            <person name="Oshima A."/>
            <person name="Sasaki N."/>
            <person name="Aotsuka S."/>
            <person name="Yoshikawa Y."/>
            <person name="Matsunawa H."/>
            <person name="Ichihara T."/>
            <person name="Shiohata N."/>
            <person name="Sano S."/>
            <person name="Moriya S."/>
            <person name="Momiyama H."/>
            <person name="Satoh N."/>
            <person name="Takami S."/>
            <person name="Terashima Y."/>
            <person name="Suzuki O."/>
            <person name="Nakagawa S."/>
            <person name="Senoh A."/>
            <person name="Mizoguchi H."/>
            <person name="Goto Y."/>
            <person name="Shimizu F."/>
            <person name="Wakebe H."/>
            <person name="Hishigaki H."/>
            <person name="Watanabe T."/>
            <person name="Sugiyama A."/>
            <person name="Takemoto M."/>
            <person name="Kawakami B."/>
            <person name="Yamazaki M."/>
            <person name="Watanabe K."/>
            <person name="Kumagai A."/>
            <person name="Itakura S."/>
            <person name="Fukuzumi Y."/>
            <person name="Fujimori Y."/>
            <person name="Komiyama M."/>
            <person name="Tashiro H."/>
            <person name="Tanigami A."/>
            <person name="Fujiwara T."/>
            <person name="Ono T."/>
            <person name="Yamada K."/>
            <person name="Fujii Y."/>
            <person name="Ozaki K."/>
            <person name="Hirao M."/>
            <person name="Ohmori Y."/>
            <person name="Kawabata A."/>
            <person name="Hikiji T."/>
            <person name="Kobatake N."/>
            <person name="Inagaki H."/>
            <person name="Ikema Y."/>
            <person name="Okamoto S."/>
            <person name="Okitani R."/>
            <person name="Kawakami T."/>
            <person name="Noguchi S."/>
            <person name="Itoh T."/>
            <person name="Shigeta K."/>
            <person name="Senba T."/>
            <person name="Matsumura K."/>
            <person name="Nakajima Y."/>
            <person name="Mizuno T."/>
            <person name="Morinaga M."/>
            <person name="Sasaki M."/>
            <person name="Togashi T."/>
            <person name="Oyama M."/>
            <person name="Hata H."/>
            <person name="Watanabe M."/>
            <person name="Komatsu T."/>
            <person name="Mizushima-Sugano J."/>
            <person name="Satoh T."/>
            <person name="Shirai Y."/>
            <person name="Takahashi Y."/>
            <person name="Nakagawa K."/>
            <person name="Okumura K."/>
            <person name="Nagase T."/>
            <person name="Nomura N."/>
            <person name="Kikuchi H."/>
            <person name="Masuho Y."/>
            <person name="Yamashita R."/>
            <person name="Nakai K."/>
            <person name="Yada T."/>
            <person name="Nakamura Y."/>
            <person name="Ohara O."/>
            <person name="Isogai T."/>
            <person name="Sugano S."/>
        </authorList>
    </citation>
    <scope>NUCLEOTIDE SEQUENCE [LARGE SCALE MRNA]</scope>
    <source>
        <tissue>Lung</tissue>
    </source>
</reference>
<reference key="5">
    <citation type="journal article" date="2007" name="BMC Genomics">
        <title>The full-ORF clone resource of the German cDNA consortium.</title>
        <authorList>
            <person name="Bechtel S."/>
            <person name="Rosenfelder H."/>
            <person name="Duda A."/>
            <person name="Schmidt C.P."/>
            <person name="Ernst U."/>
            <person name="Wellenreuther R."/>
            <person name="Mehrle A."/>
            <person name="Schuster C."/>
            <person name="Bahr A."/>
            <person name="Bloecker H."/>
            <person name="Heubner D."/>
            <person name="Hoerlein A."/>
            <person name="Michel G."/>
            <person name="Wedler H."/>
            <person name="Koehrer K."/>
            <person name="Ottenwaelder B."/>
            <person name="Poustka A."/>
            <person name="Wiemann S."/>
            <person name="Schupp I."/>
        </authorList>
    </citation>
    <scope>NUCLEOTIDE SEQUENCE [LARGE SCALE MRNA]</scope>
    <source>
        <tissue>Retina</tissue>
    </source>
</reference>
<reference key="6">
    <citation type="submission" date="2005-09" db="EMBL/GenBank/DDBJ databases">
        <authorList>
            <person name="Mural R.J."/>
            <person name="Istrail S."/>
            <person name="Sutton G.G."/>
            <person name="Florea L."/>
            <person name="Halpern A.L."/>
            <person name="Mobarry C.M."/>
            <person name="Lippert R."/>
            <person name="Walenz B."/>
            <person name="Shatkay H."/>
            <person name="Dew I."/>
            <person name="Miller J.R."/>
            <person name="Flanigan M.J."/>
            <person name="Edwards N.J."/>
            <person name="Bolanos R."/>
            <person name="Fasulo D."/>
            <person name="Halldorsson B.V."/>
            <person name="Hannenhalli S."/>
            <person name="Turner R."/>
            <person name="Yooseph S."/>
            <person name="Lu F."/>
            <person name="Nusskern D.R."/>
            <person name="Shue B.C."/>
            <person name="Zheng X.H."/>
            <person name="Zhong F."/>
            <person name="Delcher A.L."/>
            <person name="Huson D.H."/>
            <person name="Kravitz S.A."/>
            <person name="Mouchard L."/>
            <person name="Reinert K."/>
            <person name="Remington K.A."/>
            <person name="Clark A.G."/>
            <person name="Waterman M.S."/>
            <person name="Eichler E.E."/>
            <person name="Adams M.D."/>
            <person name="Hunkapiller M.W."/>
            <person name="Myers E.W."/>
            <person name="Venter J.C."/>
        </authorList>
    </citation>
    <scope>NUCLEOTIDE SEQUENCE [LARGE SCALE GENOMIC DNA]</scope>
</reference>
<reference key="7">
    <citation type="journal article" date="2004" name="Genome Res.">
        <title>The status, quality, and expansion of the NIH full-length cDNA project: the Mammalian Gene Collection (MGC).</title>
        <authorList>
            <consortium name="The MGC Project Team"/>
        </authorList>
    </citation>
    <scope>NUCLEOTIDE SEQUENCE [LARGE SCALE MRNA]</scope>
    <source>
        <tissue>Eye</tissue>
    </source>
</reference>
<reference key="8">
    <citation type="journal article" date="2012" name="Mol. Cell. Proteomics">
        <title>Comparative large-scale characterisation of plant vs. mammal proteins reveals similar and idiosyncratic N-alpha acetylation features.</title>
        <authorList>
            <person name="Bienvenut W.V."/>
            <person name="Sumpton D."/>
            <person name="Martinez A."/>
            <person name="Lilla S."/>
            <person name="Espagne C."/>
            <person name="Meinnel T."/>
            <person name="Giglione C."/>
        </authorList>
    </citation>
    <scope>ACETYLATION [LARGE SCALE ANALYSIS] AT ALA-2</scope>
    <scope>CLEAVAGE OF INITIATOR METHIONINE [LARGE SCALE ANALYSIS]</scope>
    <scope>IDENTIFICATION BY MASS SPECTROMETRY [LARGE SCALE ANALYSIS]</scope>
</reference>
<keyword id="KW-0007">Acetylation</keyword>
<keyword id="KW-0256">Endoplasmic reticulum</keyword>
<keyword id="KW-0333">Golgi apparatus</keyword>
<keyword id="KW-0472">Membrane</keyword>
<keyword id="KW-1267">Proteomics identification</keyword>
<keyword id="KW-1185">Reference proteome</keyword>
<keyword id="KW-0812">Transmembrane</keyword>
<keyword id="KW-1133">Transmembrane helix</keyword>
<comment type="subunit">
    <text evidence="1">May form homotrimers or homodimers.</text>
</comment>
<comment type="interaction">
    <interactant intactId="EBI-12366453">
        <id>P56557</id>
    </interactant>
    <interactant intactId="EBI-19125216">
        <id>Q86WK6</id>
        <label>AMIGO1</label>
    </interactant>
    <organismsDiffer>false</organismsDiffer>
    <experiments>3</experiments>
</comment>
<comment type="interaction">
    <interactant intactId="EBI-12366453">
        <id>P56557</id>
    </interactant>
    <interactant intactId="EBI-78035">
        <id>Q07817</id>
        <label>BCL2L1</label>
    </interactant>
    <organismsDiffer>false</organismsDiffer>
    <experiments>3</experiments>
</comment>
<comment type="interaction">
    <interactant intactId="EBI-12366453">
        <id>P56557</id>
    </interactant>
    <interactant intactId="EBI-17274839">
        <id>P58418</id>
        <label>CLRN1</label>
    </interactant>
    <organismsDiffer>false</organismsDiffer>
    <experiments>3</experiments>
</comment>
<comment type="interaction">
    <interactant intactId="EBI-12366453">
        <id>P56557</id>
    </interactant>
    <interactant intactId="EBI-6942903">
        <id>Q96BA8</id>
        <label>CREB3L1</label>
    </interactant>
    <organismsDiffer>false</organismsDiffer>
    <experiments>3</experiments>
</comment>
<comment type="interaction">
    <interactant intactId="EBI-12366453">
        <id>P56557</id>
    </interactant>
    <interactant intactId="EBI-529425">
        <id>Q92838</id>
        <label>EDA</label>
    </interactant>
    <organismsDiffer>false</organismsDiffer>
    <experiments>3</experiments>
</comment>
<comment type="interaction">
    <interactant intactId="EBI-12366453">
        <id>P56557</id>
    </interactant>
    <interactant intactId="EBI-18304435">
        <id>Q5JX71</id>
        <label>FAM209A</label>
    </interactant>
    <organismsDiffer>false</organismsDiffer>
    <experiments>3</experiments>
</comment>
<comment type="interaction">
    <interactant intactId="EBI-12366453">
        <id>P56557</id>
    </interactant>
    <interactant intactId="EBI-12175685">
        <id>Q14802-3</id>
        <label>FXYD3</label>
    </interactant>
    <organismsDiffer>false</organismsDiffer>
    <experiments>3</experiments>
</comment>
<comment type="interaction">
    <interactant intactId="EBI-12366453">
        <id>P56557</id>
    </interactant>
    <interactant intactId="EBI-13345167">
        <id>Q8TDT2</id>
        <label>GPR152</label>
    </interactant>
    <organismsDiffer>false</organismsDiffer>
    <experiments>3</experiments>
</comment>
<comment type="interaction">
    <interactant intactId="EBI-12366453">
        <id>P56557</id>
    </interactant>
    <interactant intactId="EBI-11721746">
        <id>Q8TED1</id>
        <label>GPX8</label>
    </interactant>
    <organismsDiffer>false</organismsDiffer>
    <experiments>3</experiments>
</comment>
<comment type="interaction">
    <interactant intactId="EBI-12366453">
        <id>P56557</id>
    </interactant>
    <interactant intactId="EBI-17686856">
        <id>Q95HB9</id>
        <label>HLA-DPA1</label>
    </interactant>
    <organismsDiffer>false</organismsDiffer>
    <experiments>3</experiments>
</comment>
<comment type="interaction">
    <interactant intactId="EBI-12366453">
        <id>P56557</id>
    </interactant>
    <interactant intactId="EBI-15672507">
        <id>O15243</id>
        <label>LEPROT</label>
    </interactant>
    <organismsDiffer>false</organismsDiffer>
    <experiments>3</experiments>
</comment>
<comment type="interaction">
    <interactant intactId="EBI-12366453">
        <id>P56557</id>
    </interactant>
    <interactant intactId="EBI-750776">
        <id>O95214</id>
        <label>LEPROTL1</label>
    </interactant>
    <organismsDiffer>false</organismsDiffer>
    <experiments>3</experiments>
</comment>
<comment type="interaction">
    <interactant intactId="EBI-12366453">
        <id>P56557</id>
    </interactant>
    <interactant intactId="EBI-2820517">
        <id>Q8TAF8</id>
        <label>LHFPL5</label>
    </interactant>
    <organismsDiffer>false</organismsDiffer>
    <experiments>3</experiments>
</comment>
<comment type="interaction">
    <interactant intactId="EBI-12366453">
        <id>P56557</id>
    </interactant>
    <interactant intactId="EBI-19157577">
        <id>O76036-6</id>
        <label>NCR1</label>
    </interactant>
    <organismsDiffer>false</organismsDiffer>
    <experiments>3</experiments>
</comment>
<comment type="interaction">
    <interactant intactId="EBI-12366453">
        <id>P56557</id>
    </interactant>
    <interactant intactId="EBI-17247926">
        <id>Q9NY72</id>
        <label>SCN3B</label>
    </interactant>
    <organismsDiffer>false</organismsDiffer>
    <experiments>3</experiments>
</comment>
<comment type="interaction">
    <interactant intactId="EBI-12366453">
        <id>P56557</id>
    </interactant>
    <interactant intactId="EBI-18159983">
        <id>Q3KNW5</id>
        <label>SLC10A6</label>
    </interactant>
    <organismsDiffer>false</organismsDiffer>
    <experiments>3</experiments>
</comment>
<comment type="interaction">
    <interactant intactId="EBI-12366453">
        <id>P56557</id>
    </interactant>
    <interactant intactId="EBI-12243266">
        <id>Q7RTY0</id>
        <label>SLC16A13</label>
    </interactant>
    <organismsDiffer>false</organismsDiffer>
    <experiments>3</experiments>
</comment>
<comment type="interaction">
    <interactant intactId="EBI-12366453">
        <id>P56557</id>
    </interactant>
    <interactant intactId="EBI-17295964">
        <id>Q9NQQ7-3</id>
        <label>SLC35C2</label>
    </interactant>
    <organismsDiffer>false</organismsDiffer>
    <experiments>3</experiments>
</comment>
<comment type="interaction">
    <interactant intactId="EBI-12366453">
        <id>P56557</id>
    </interactant>
    <interactant intactId="EBI-8638294">
        <id>Q9NUH8</id>
        <label>TMEM14B</label>
    </interactant>
    <organismsDiffer>false</organismsDiffer>
    <experiments>3</experiments>
</comment>
<comment type="interaction">
    <interactant intactId="EBI-12366453">
        <id>P56557</id>
    </interactant>
    <interactant intactId="EBI-18178701">
        <id>Q4KMG9</id>
        <label>TMEM52B</label>
    </interactant>
    <organismsDiffer>false</organismsDiffer>
    <experiments>3</experiments>
</comment>
<comment type="interaction">
    <interactant intactId="EBI-12366453">
        <id>P56557</id>
    </interactant>
    <interactant intactId="EBI-17198826">
        <id>Q6PEY1</id>
        <label>TMEM88</label>
    </interactant>
    <organismsDiffer>false</organismsDiffer>
    <experiments>3</experiments>
</comment>
<comment type="interaction">
    <interactant intactId="EBI-12366453">
        <id>P56557</id>
    </interactant>
    <interactant intactId="EBI-6447886">
        <id>Q9Y320</id>
        <label>TMX2</label>
    </interactant>
    <organismsDiffer>false</organismsDiffer>
    <experiments>3</experiments>
</comment>
<comment type="subcellular location">
    <subcellularLocation>
        <location evidence="1">Endoplasmic reticulum membrane</location>
        <topology evidence="2">Multi-pass membrane protein</topology>
    </subcellularLocation>
    <subcellularLocation>
        <location evidence="1">Golgi apparatus membrane</location>
        <topology evidence="2">Multi-pass membrane protein</topology>
    </subcellularLocation>
</comment>
<comment type="similarity">
    <text evidence="3">Belongs to the UPF0220 family.</text>
</comment>
<proteinExistence type="evidence at protein level"/>
<protein>
    <recommendedName>
        <fullName>Transmembrane protein 50B</fullName>
    </recommendedName>
    <alternativeName>
        <fullName>HCV p7-trans-regulated protein 3</fullName>
    </alternativeName>
</protein>
<accession>P56557</accession>
<accession>B2R4L4</accession>
<accession>D3DSF1</accession>
<accession>O60537</accession>
<accession>Q5PY47</accession>
<gene>
    <name type="primary">TMEM50B</name>
    <name type="synonym">C21orf4</name>
    <name type="ORF">UNQ167/PRO193</name>
</gene>
<name>TM50B_HUMAN</name>
<evidence type="ECO:0000250" key="1">
    <source>
        <dbReference type="UniProtKB" id="Q9D1X9"/>
    </source>
</evidence>
<evidence type="ECO:0000255" key="2"/>
<evidence type="ECO:0000305" key="3"/>
<evidence type="ECO:0007744" key="4">
    <source>
    </source>
</evidence>
<sequence>MAGFLDNFRWPECECIDWSERRNAVASVVAGILFFTGWWIMIDAAVVYPKPEQLNHAFHTCGVFSTLAFFMINAVSNAQVRGDSYESGCLGRTGARVWLFIGFMLMFGSLIASMWILFGAYVTQNTDVYPGLAVFFQNALIFFSTLIYKFGRTEELWT</sequence>